<reference key="1">
    <citation type="journal article" date="2008" name="Stem Cells">
        <title>Fibroblast growth factor 4 and its novel splice isoform have opposing effects on the maintenance of human embryonic stem cell self-renewal.</title>
        <authorList>
            <person name="Mayshar Y."/>
            <person name="Rom E."/>
            <person name="Chumakov I."/>
            <person name="Kronman A."/>
            <person name="Yayon A."/>
            <person name="Benvenisty N."/>
        </authorList>
    </citation>
    <scope>NUCLEOTIDE SEQUENCE [MRNA] (ISOFORM 2)</scope>
    <scope>ALTERNATIVE SPLICING</scope>
</reference>
<reference key="2">
    <citation type="journal article" date="1987" name="Proc. Natl. Acad. Sci. U.S.A.">
        <title>Genomic sequence of hst, a transforming gene encoding a protein homologous to fibroblast growth factors and the int-2-encoded protein.</title>
        <authorList>
            <person name="Yoshida T."/>
            <person name="Miyagawa K."/>
            <person name="Odagiri H."/>
            <person name="Sakamoto H."/>
            <person name="Little P.F.R."/>
            <person name="Terada M."/>
            <person name="Sugimura T."/>
        </authorList>
    </citation>
    <scope>NUCLEOTIDE SEQUENCE [GENOMIC DNA]</scope>
</reference>
<reference key="3">
    <citation type="journal article" date="1987" name="Proc. Natl. Acad. Sci. U.S.A.">
        <title>cDNA sequence of human transforming gene hst and identification of the coding sequence required for transforming activity.</title>
        <authorList>
            <person name="Taira M."/>
            <person name="Yoshida T."/>
            <person name="Miyagawa K."/>
            <person name="Sakamoto H."/>
            <person name="Terada M."/>
            <person name="Sugimura T."/>
        </authorList>
    </citation>
    <scope>NUCLEOTIDE SEQUENCE [GENOMIC DNA]</scope>
</reference>
<reference key="4">
    <citation type="journal article" date="1987" name="Cell">
        <title>An oncogene isolated by transfection of Kaposi's sarcoma DNA encodes a growth factor that is a member of the FGF family.</title>
        <authorList>
            <person name="Delli-Bovi P."/>
            <person name="Curatola A.M."/>
            <person name="Kern F.G."/>
            <person name="Greco A."/>
            <person name="Ittmann M."/>
            <person name="Basilico C."/>
        </authorList>
    </citation>
    <scope>NUCLEOTIDE SEQUENCE [MRNA] (ISOFORM 1)</scope>
</reference>
<reference key="5">
    <citation type="journal article" date="1996" name="J. Biol. Chem.">
        <title>Receptor specificity of the fibroblast growth factor family.</title>
        <authorList>
            <person name="Ornitz D.M."/>
            <person name="Xu J."/>
            <person name="Colvin J.S."/>
            <person name="McEwen D.G."/>
            <person name="MacArthur C.A."/>
            <person name="Coulier F."/>
            <person name="Gao G."/>
            <person name="Goldfarb M."/>
        </authorList>
    </citation>
    <scope>INTERACTION WITH FGFR1; FGFR2; FGFR3 AND FGFR4</scope>
    <scope>FUNCTION IN CELL PROLIFERATION</scope>
</reference>
<reference key="6">
    <citation type="journal article" date="2010" name="Nat. Rev. Cancer">
        <title>Fibroblast growth factor signalling: from development to cancer.</title>
        <authorList>
            <person name="Turner N."/>
            <person name="Grose R."/>
        </authorList>
    </citation>
    <scope>REVIEW</scope>
</reference>
<reference key="7">
    <citation type="journal article" date="2001" name="Mol. Cell. Biol.">
        <title>Identification of receptor and heparin binding sites in fibroblast growth factor 4 by structure-based mutagenesis.</title>
        <authorList>
            <person name="Bellosta P."/>
            <person name="Iwahori A."/>
            <person name="Plotnikov A.N."/>
            <person name="Eliseenkova A.V."/>
            <person name="Basilico C."/>
            <person name="Mohammadi M."/>
        </authorList>
    </citation>
    <scope>X-RAY CRYSTALLOGRAPHY (1.8 ANGSTROMS) OF 79-206</scope>
</reference>
<name>FGF4_HUMAN</name>
<feature type="signal peptide" evidence="2">
    <location>
        <begin position="1"/>
        <end position="30"/>
    </location>
</feature>
<feature type="chain" id="PRO_0000008953" description="Fibroblast growth factor 4">
    <location>
        <begin position="31"/>
        <end position="206"/>
    </location>
</feature>
<feature type="splice variant" id="VSP_053541" description="In isoform 2." evidence="4">
    <original>SLLELSPVERGVVSIFGVASRFFVAMSSKGKLYGSPFFTDECTFKEILLPNNYNAYESYKYPGMFIALSKNGKTKKGNRVSPTMKVTHFLPRL</original>
    <variation>TLLHR</variation>
    <location>
        <begin position="114"/>
        <end position="206"/>
    </location>
</feature>
<feature type="strand" evidence="8">
    <location>
        <begin position="82"/>
        <end position="88"/>
    </location>
</feature>
<feature type="strand" evidence="8">
    <location>
        <begin position="94"/>
        <end position="98"/>
    </location>
</feature>
<feature type="strand" evidence="8">
    <location>
        <begin position="104"/>
        <end position="109"/>
    </location>
</feature>
<feature type="helix" evidence="8">
    <location>
        <begin position="112"/>
        <end position="114"/>
    </location>
</feature>
<feature type="strand" evidence="8">
    <location>
        <begin position="116"/>
        <end position="122"/>
    </location>
</feature>
<feature type="strand" evidence="8">
    <location>
        <begin position="125"/>
        <end position="130"/>
    </location>
</feature>
<feature type="turn" evidence="8">
    <location>
        <begin position="131"/>
        <end position="134"/>
    </location>
</feature>
<feature type="strand" evidence="8">
    <location>
        <begin position="135"/>
        <end position="139"/>
    </location>
</feature>
<feature type="strand" evidence="8">
    <location>
        <begin position="145"/>
        <end position="150"/>
    </location>
</feature>
<feature type="strand" evidence="8">
    <location>
        <begin position="155"/>
        <end position="161"/>
    </location>
</feature>
<feature type="helix" evidence="8">
    <location>
        <begin position="163"/>
        <end position="165"/>
    </location>
</feature>
<feature type="strand" evidence="8">
    <location>
        <begin position="167"/>
        <end position="174"/>
    </location>
</feature>
<feature type="strand" evidence="8">
    <location>
        <begin position="185"/>
        <end position="187"/>
    </location>
</feature>
<feature type="helix" evidence="8">
    <location>
        <begin position="190"/>
        <end position="192"/>
    </location>
</feature>
<feature type="helix" evidence="8">
    <location>
        <begin position="198"/>
        <end position="200"/>
    </location>
</feature>
<feature type="strand" evidence="8">
    <location>
        <begin position="202"/>
        <end position="205"/>
    </location>
</feature>
<protein>
    <recommendedName>
        <fullName evidence="7">Fibroblast growth factor 4</fullName>
        <shortName evidence="1">FGF-4</shortName>
    </recommendedName>
    <alternativeName>
        <fullName evidence="7">Heparin secretory-transforming protein 1</fullName>
        <shortName evidence="5">HST</shortName>
        <shortName evidence="7">HST-1</shortName>
        <shortName>HSTF-1</shortName>
    </alternativeName>
    <alternativeName>
        <fullName>Heparin-binding growth factor 4</fullName>
        <shortName evidence="7">HBGF-4</shortName>
    </alternativeName>
    <alternativeName>
        <fullName>Transforming protein KS3</fullName>
    </alternativeName>
</protein>
<gene>
    <name evidence="7" type="primary">FGF4</name>
    <name evidence="7" type="synonym">HST</name>
    <name type="synonym">HSTF1</name>
    <name type="synonym">KS3</name>
</gene>
<evidence type="ECO:0000250" key="1">
    <source>
        <dbReference type="UniProtKB" id="P11403"/>
    </source>
</evidence>
<evidence type="ECO:0000255" key="2"/>
<evidence type="ECO:0000269" key="3">
    <source>
    </source>
</evidence>
<evidence type="ECO:0000303" key="4">
    <source>
    </source>
</evidence>
<evidence type="ECO:0000303" key="5">
    <source>
    </source>
</evidence>
<evidence type="ECO:0000305" key="6"/>
<evidence type="ECO:0000312" key="7">
    <source>
        <dbReference type="HGNC" id="HGNC:3682"/>
    </source>
</evidence>
<evidence type="ECO:0007829" key="8">
    <source>
        <dbReference type="PDB" id="1IJT"/>
    </source>
</evidence>
<accession>P08620</accession>
<accession>B7U994</accession>
<proteinExistence type="evidence at protein level"/>
<organism>
    <name type="scientific">Homo sapiens</name>
    <name type="common">Human</name>
    <dbReference type="NCBI Taxonomy" id="9606"/>
    <lineage>
        <taxon>Eukaryota</taxon>
        <taxon>Metazoa</taxon>
        <taxon>Chordata</taxon>
        <taxon>Craniata</taxon>
        <taxon>Vertebrata</taxon>
        <taxon>Euteleostomi</taxon>
        <taxon>Mammalia</taxon>
        <taxon>Eutheria</taxon>
        <taxon>Euarchontoglires</taxon>
        <taxon>Primates</taxon>
        <taxon>Haplorrhini</taxon>
        <taxon>Catarrhini</taxon>
        <taxon>Hominidae</taxon>
        <taxon>Homo</taxon>
    </lineage>
</organism>
<dbReference type="EMBL" id="FJ456981">
    <property type="protein sequence ID" value="ACJ68447.1"/>
    <property type="molecule type" value="mRNA"/>
</dbReference>
<dbReference type="EMBL" id="J02986">
    <property type="protein sequence ID" value="AAB59555.1"/>
    <property type="molecule type" value="Genomic_DNA"/>
</dbReference>
<dbReference type="EMBL" id="M17446">
    <property type="protein sequence ID" value="AAA59473.1"/>
    <property type="molecule type" value="mRNA"/>
</dbReference>
<dbReference type="CCDS" id="CCDS8194.1">
    <molecule id="P08620-1"/>
</dbReference>
<dbReference type="PIR" id="A28417">
    <property type="entry name" value="TVHUHS"/>
</dbReference>
<dbReference type="RefSeq" id="NP_001998.1">
    <molecule id="P08620-1"/>
    <property type="nucleotide sequence ID" value="NM_002007.4"/>
</dbReference>
<dbReference type="RefSeq" id="XP_005273904.1">
    <property type="nucleotide sequence ID" value="XM_005273847.1"/>
</dbReference>
<dbReference type="PDB" id="1IJT">
    <property type="method" value="X-ray"/>
    <property type="resolution" value="1.80 A"/>
    <property type="chains" value="A=79-206"/>
</dbReference>
<dbReference type="PDBsum" id="1IJT"/>
<dbReference type="SMR" id="P08620"/>
<dbReference type="BioGRID" id="108540">
    <property type="interactions" value="41"/>
</dbReference>
<dbReference type="DIP" id="DIP-4017N"/>
<dbReference type="FunCoup" id="P08620">
    <property type="interactions" value="896"/>
</dbReference>
<dbReference type="IntAct" id="P08620">
    <property type="interactions" value="40"/>
</dbReference>
<dbReference type="STRING" id="9606.ENSP00000168712"/>
<dbReference type="BindingDB" id="P08620"/>
<dbReference type="ChEMBL" id="CHEMBL3286072"/>
<dbReference type="DrugBank" id="DB01109">
    <property type="generic name" value="Heparin"/>
</dbReference>
<dbReference type="DrugBank" id="DB00686">
    <property type="generic name" value="Pentosan polysulfate"/>
</dbReference>
<dbReference type="DrugBank" id="DB05309">
    <property type="generic name" value="TP-508"/>
</dbReference>
<dbReference type="GlyGen" id="P08620">
    <property type="glycosylation" value="1 site"/>
</dbReference>
<dbReference type="iPTMnet" id="P08620"/>
<dbReference type="PhosphoSitePlus" id="P08620"/>
<dbReference type="BioMuta" id="FGF4"/>
<dbReference type="DMDM" id="122750"/>
<dbReference type="jPOST" id="P08620"/>
<dbReference type="MassIVE" id="P08620"/>
<dbReference type="PaxDb" id="9606-ENSP00000168712"/>
<dbReference type="PeptideAtlas" id="P08620"/>
<dbReference type="ProteomicsDB" id="52137">
    <molecule id="P08620-1"/>
</dbReference>
<dbReference type="Antibodypedia" id="2159">
    <property type="antibodies" value="462 antibodies from 39 providers"/>
</dbReference>
<dbReference type="DNASU" id="2249"/>
<dbReference type="Ensembl" id="ENST00000168712.3">
    <molecule id="P08620-1"/>
    <property type="protein sequence ID" value="ENSP00000168712.1"/>
    <property type="gene ID" value="ENSG00000075388.4"/>
</dbReference>
<dbReference type="GeneID" id="2249"/>
<dbReference type="KEGG" id="hsa:2249"/>
<dbReference type="MANE-Select" id="ENST00000168712.3">
    <property type="protein sequence ID" value="ENSP00000168712.1"/>
    <property type="RefSeq nucleotide sequence ID" value="NM_002007.4"/>
    <property type="RefSeq protein sequence ID" value="NP_001998.1"/>
</dbReference>
<dbReference type="UCSC" id="uc001opg.2">
    <molecule id="P08620-1"/>
    <property type="organism name" value="human"/>
</dbReference>
<dbReference type="AGR" id="HGNC:3682"/>
<dbReference type="CTD" id="2249"/>
<dbReference type="DisGeNET" id="2249"/>
<dbReference type="GeneCards" id="FGF4"/>
<dbReference type="HGNC" id="HGNC:3682">
    <property type="gene designation" value="FGF4"/>
</dbReference>
<dbReference type="HPA" id="ENSG00000075388">
    <property type="expression patterns" value="Not detected"/>
</dbReference>
<dbReference type="MalaCards" id="FGF4"/>
<dbReference type="MIM" id="164980">
    <property type="type" value="gene"/>
</dbReference>
<dbReference type="neXtProt" id="NX_P08620"/>
<dbReference type="OpenTargets" id="ENSG00000075388"/>
<dbReference type="PharmGKB" id="PA28121"/>
<dbReference type="VEuPathDB" id="HostDB:ENSG00000075388"/>
<dbReference type="eggNOG" id="KOG3885">
    <property type="taxonomic scope" value="Eukaryota"/>
</dbReference>
<dbReference type="GeneTree" id="ENSGT00940000158825"/>
<dbReference type="HOGENOM" id="CLU_081609_4_1_1"/>
<dbReference type="InParanoid" id="P08620"/>
<dbReference type="OMA" id="YESHTYP"/>
<dbReference type="OrthoDB" id="5960247at2759"/>
<dbReference type="PAN-GO" id="P08620">
    <property type="GO annotations" value="11 GO annotations based on evolutionary models"/>
</dbReference>
<dbReference type="PhylomeDB" id="P08620"/>
<dbReference type="TreeFam" id="TF317805"/>
<dbReference type="PathwayCommons" id="P08620"/>
<dbReference type="Reactome" id="R-HSA-109704">
    <property type="pathway name" value="PI3K Cascade"/>
</dbReference>
<dbReference type="Reactome" id="R-HSA-1257604">
    <property type="pathway name" value="PIP3 activates AKT signaling"/>
</dbReference>
<dbReference type="Reactome" id="R-HSA-1839122">
    <property type="pathway name" value="Signaling by activated point mutants of FGFR1"/>
</dbReference>
<dbReference type="Reactome" id="R-HSA-1839130">
    <property type="pathway name" value="Signaling by activated point mutants of FGFR3"/>
</dbReference>
<dbReference type="Reactome" id="R-HSA-190322">
    <property type="pathway name" value="FGFR4 ligand binding and activation"/>
</dbReference>
<dbReference type="Reactome" id="R-HSA-190372">
    <property type="pathway name" value="FGFR3c ligand binding and activation"/>
</dbReference>
<dbReference type="Reactome" id="R-HSA-190373">
    <property type="pathway name" value="FGFR1c ligand binding and activation"/>
</dbReference>
<dbReference type="Reactome" id="R-HSA-190375">
    <property type="pathway name" value="FGFR2c ligand binding and activation"/>
</dbReference>
<dbReference type="Reactome" id="R-HSA-2033519">
    <property type="pathway name" value="Activated point mutants of FGFR2"/>
</dbReference>
<dbReference type="Reactome" id="R-HSA-2219530">
    <property type="pathway name" value="Constitutive Signaling by Aberrant PI3K in Cancer"/>
</dbReference>
<dbReference type="Reactome" id="R-HSA-5654219">
    <property type="pathway name" value="Phospholipase C-mediated cascade: FGFR1"/>
</dbReference>
<dbReference type="Reactome" id="R-HSA-5654221">
    <property type="pathway name" value="Phospholipase C-mediated cascade, FGFR2"/>
</dbReference>
<dbReference type="Reactome" id="R-HSA-5654227">
    <property type="pathway name" value="Phospholipase C-mediated cascade, FGFR3"/>
</dbReference>
<dbReference type="Reactome" id="R-HSA-5654228">
    <property type="pathway name" value="Phospholipase C-mediated cascade, FGFR4"/>
</dbReference>
<dbReference type="Reactome" id="R-HSA-5654687">
    <property type="pathway name" value="Downstream signaling of activated FGFR1"/>
</dbReference>
<dbReference type="Reactome" id="R-HSA-5654688">
    <property type="pathway name" value="SHC-mediated cascade:FGFR1"/>
</dbReference>
<dbReference type="Reactome" id="R-HSA-5654689">
    <property type="pathway name" value="PI-3K cascade:FGFR1"/>
</dbReference>
<dbReference type="Reactome" id="R-HSA-5654693">
    <property type="pathway name" value="FRS-mediated FGFR1 signaling"/>
</dbReference>
<dbReference type="Reactome" id="R-HSA-5654695">
    <property type="pathway name" value="PI-3K cascade:FGFR2"/>
</dbReference>
<dbReference type="Reactome" id="R-HSA-5654699">
    <property type="pathway name" value="SHC-mediated cascade:FGFR2"/>
</dbReference>
<dbReference type="Reactome" id="R-HSA-5654700">
    <property type="pathway name" value="FRS-mediated FGFR2 signaling"/>
</dbReference>
<dbReference type="Reactome" id="R-HSA-5654704">
    <property type="pathway name" value="SHC-mediated cascade:FGFR3"/>
</dbReference>
<dbReference type="Reactome" id="R-HSA-5654706">
    <property type="pathway name" value="FRS-mediated FGFR3 signaling"/>
</dbReference>
<dbReference type="Reactome" id="R-HSA-5654710">
    <property type="pathway name" value="PI-3K cascade:FGFR3"/>
</dbReference>
<dbReference type="Reactome" id="R-HSA-5654712">
    <property type="pathway name" value="FRS-mediated FGFR4 signaling"/>
</dbReference>
<dbReference type="Reactome" id="R-HSA-5654719">
    <property type="pathway name" value="SHC-mediated cascade:FGFR4"/>
</dbReference>
<dbReference type="Reactome" id="R-HSA-5654720">
    <property type="pathway name" value="PI-3K cascade:FGFR4"/>
</dbReference>
<dbReference type="Reactome" id="R-HSA-5654726">
    <property type="pathway name" value="Negative regulation of FGFR1 signaling"/>
</dbReference>
<dbReference type="Reactome" id="R-HSA-5654727">
    <property type="pathway name" value="Negative regulation of FGFR2 signaling"/>
</dbReference>
<dbReference type="Reactome" id="R-HSA-5654732">
    <property type="pathway name" value="Negative regulation of FGFR3 signaling"/>
</dbReference>
<dbReference type="Reactome" id="R-HSA-5654733">
    <property type="pathway name" value="Negative regulation of FGFR4 signaling"/>
</dbReference>
<dbReference type="Reactome" id="R-HSA-5655253">
    <property type="pathway name" value="Signaling by FGFR2 in disease"/>
</dbReference>
<dbReference type="Reactome" id="R-HSA-5655302">
    <property type="pathway name" value="Signaling by FGFR1 in disease"/>
</dbReference>
<dbReference type="Reactome" id="R-HSA-5655332">
    <property type="pathway name" value="Signaling by FGFR3 in disease"/>
</dbReference>
<dbReference type="Reactome" id="R-HSA-5658623">
    <property type="pathway name" value="FGFRL1 modulation of FGFR1 signaling"/>
</dbReference>
<dbReference type="Reactome" id="R-HSA-5673001">
    <property type="pathway name" value="RAF/MAP kinase cascade"/>
</dbReference>
<dbReference type="Reactome" id="R-HSA-6811558">
    <property type="pathway name" value="PI5P, PP2A and IER3 Regulate PI3K/AKT Signaling"/>
</dbReference>
<dbReference type="Reactome" id="R-HSA-9834899">
    <property type="pathway name" value="Specification of the neural plate border"/>
</dbReference>
<dbReference type="Reactome" id="R-HSA-9925561">
    <property type="pathway name" value="Developmental Lineage of Pancreatic Acinar Cells"/>
</dbReference>
<dbReference type="SignaLink" id="P08620"/>
<dbReference type="SIGNOR" id="P08620"/>
<dbReference type="BioGRID-ORCS" id="2249">
    <property type="hits" value="11 hits in 1157 CRISPR screens"/>
</dbReference>
<dbReference type="EvolutionaryTrace" id="P08620"/>
<dbReference type="GeneWiki" id="FGF4"/>
<dbReference type="GenomeRNAi" id="2249"/>
<dbReference type="Pharos" id="P08620">
    <property type="development level" value="Tbio"/>
</dbReference>
<dbReference type="PRO" id="PR:P08620"/>
<dbReference type="Proteomes" id="UP000005640">
    <property type="component" value="Chromosome 11"/>
</dbReference>
<dbReference type="RNAct" id="P08620">
    <property type="molecule type" value="protein"/>
</dbReference>
<dbReference type="Bgee" id="ENSG00000075388">
    <property type="expression patterns" value="Expressed in male germ line stem cell (sensu Vertebrata) in testis and 10 other cell types or tissues"/>
</dbReference>
<dbReference type="GO" id="GO:0005737">
    <property type="term" value="C:cytoplasm"/>
    <property type="evidence" value="ECO:0000318"/>
    <property type="project" value="GO_Central"/>
</dbReference>
<dbReference type="GO" id="GO:0005576">
    <property type="term" value="C:extracellular region"/>
    <property type="evidence" value="ECO:0000304"/>
    <property type="project" value="Reactome"/>
</dbReference>
<dbReference type="GO" id="GO:0005615">
    <property type="term" value="C:extracellular space"/>
    <property type="evidence" value="ECO:0000318"/>
    <property type="project" value="GO_Central"/>
</dbReference>
<dbReference type="GO" id="GO:0005104">
    <property type="term" value="F:fibroblast growth factor receptor binding"/>
    <property type="evidence" value="ECO:0000318"/>
    <property type="project" value="GO_Central"/>
</dbReference>
<dbReference type="GO" id="GO:0008083">
    <property type="term" value="F:growth factor activity"/>
    <property type="evidence" value="ECO:0000318"/>
    <property type="project" value="GO_Central"/>
</dbReference>
<dbReference type="GO" id="GO:0008201">
    <property type="term" value="F:heparin binding"/>
    <property type="evidence" value="ECO:0007669"/>
    <property type="project" value="UniProtKB-KW"/>
</dbReference>
<dbReference type="GO" id="GO:0060561">
    <property type="term" value="P:apoptotic process involved in morphogenesis"/>
    <property type="evidence" value="ECO:0007669"/>
    <property type="project" value="Ensembl"/>
</dbReference>
<dbReference type="GO" id="GO:0001502">
    <property type="term" value="P:cartilage condensation"/>
    <property type="evidence" value="ECO:0007669"/>
    <property type="project" value="Ensembl"/>
</dbReference>
<dbReference type="GO" id="GO:0007267">
    <property type="term" value="P:cell-cell signaling"/>
    <property type="evidence" value="ECO:0000304"/>
    <property type="project" value="ProtInc"/>
</dbReference>
<dbReference type="GO" id="GO:1990830">
    <property type="term" value="P:cellular response to leukemia inhibitory factor"/>
    <property type="evidence" value="ECO:0007669"/>
    <property type="project" value="Ensembl"/>
</dbReference>
<dbReference type="GO" id="GO:0060591">
    <property type="term" value="P:chondroblast differentiation"/>
    <property type="evidence" value="ECO:0000314"/>
    <property type="project" value="UniProtKB"/>
</dbReference>
<dbReference type="GO" id="GO:0060363">
    <property type="term" value="P:cranial suture morphogenesis"/>
    <property type="evidence" value="ECO:0007669"/>
    <property type="project" value="Ensembl"/>
</dbReference>
<dbReference type="GO" id="GO:0035116">
    <property type="term" value="P:embryonic hindlimb morphogenesis"/>
    <property type="evidence" value="ECO:0007669"/>
    <property type="project" value="Ensembl"/>
</dbReference>
<dbReference type="GO" id="GO:1904019">
    <property type="term" value="P:epithelial cell apoptotic process"/>
    <property type="evidence" value="ECO:0007669"/>
    <property type="project" value="Ensembl"/>
</dbReference>
<dbReference type="GO" id="GO:0008543">
    <property type="term" value="P:fibroblast growth factor receptor signaling pathway"/>
    <property type="evidence" value="ECO:0000316"/>
    <property type="project" value="MGI"/>
</dbReference>
<dbReference type="GO" id="GO:0010463">
    <property type="term" value="P:mesenchymal cell proliferation"/>
    <property type="evidence" value="ECO:0000314"/>
    <property type="project" value="UniProtKB"/>
</dbReference>
<dbReference type="GO" id="GO:0043066">
    <property type="term" value="P:negative regulation of apoptotic process"/>
    <property type="evidence" value="ECO:0007669"/>
    <property type="project" value="Ensembl"/>
</dbReference>
<dbReference type="GO" id="GO:0022008">
    <property type="term" value="P:neurogenesis"/>
    <property type="evidence" value="ECO:0000318"/>
    <property type="project" value="GO_Central"/>
</dbReference>
<dbReference type="GO" id="GO:0042475">
    <property type="term" value="P:odontogenesis of dentin-containing tooth"/>
    <property type="evidence" value="ECO:0007669"/>
    <property type="project" value="Ensembl"/>
</dbReference>
<dbReference type="GO" id="GO:0051781">
    <property type="term" value="P:positive regulation of cell division"/>
    <property type="evidence" value="ECO:0007669"/>
    <property type="project" value="UniProtKB-KW"/>
</dbReference>
<dbReference type="GO" id="GO:0008284">
    <property type="term" value="P:positive regulation of cell population proliferation"/>
    <property type="evidence" value="ECO:0000316"/>
    <property type="project" value="MGI"/>
</dbReference>
<dbReference type="GO" id="GO:0070374">
    <property type="term" value="P:positive regulation of ERK1 and ERK2 cascade"/>
    <property type="evidence" value="ECO:0000314"/>
    <property type="project" value="UniProtKB"/>
</dbReference>
<dbReference type="GO" id="GO:0010628">
    <property type="term" value="P:positive regulation of gene expression"/>
    <property type="evidence" value="ECO:0007669"/>
    <property type="project" value="Ensembl"/>
</dbReference>
<dbReference type="GO" id="GO:0043410">
    <property type="term" value="P:positive regulation of MAPK cascade"/>
    <property type="evidence" value="ECO:0000318"/>
    <property type="project" value="GO_Central"/>
</dbReference>
<dbReference type="GO" id="GO:2000648">
    <property type="term" value="P:positive regulation of stem cell proliferation"/>
    <property type="evidence" value="ECO:0007669"/>
    <property type="project" value="Ensembl"/>
</dbReference>
<dbReference type="GO" id="GO:0045944">
    <property type="term" value="P:positive regulation of transcription by RNA polymerase II"/>
    <property type="evidence" value="ECO:0007669"/>
    <property type="project" value="Ensembl"/>
</dbReference>
<dbReference type="GO" id="GO:0030334">
    <property type="term" value="P:regulation of cell migration"/>
    <property type="evidence" value="ECO:0000318"/>
    <property type="project" value="GO_Central"/>
</dbReference>
<dbReference type="GO" id="GO:2000544">
    <property type="term" value="P:regulation of endothelial cell chemotaxis to fibroblast growth factor"/>
    <property type="evidence" value="ECO:0000314"/>
    <property type="project" value="UniProtKB"/>
</dbReference>
<dbReference type="GO" id="GO:0007165">
    <property type="term" value="P:signal transduction"/>
    <property type="evidence" value="ECO:0000304"/>
    <property type="project" value="ProtInc"/>
</dbReference>
<dbReference type="GO" id="GO:0035019">
    <property type="term" value="P:somatic stem cell population maintenance"/>
    <property type="evidence" value="ECO:0007669"/>
    <property type="project" value="Ensembl"/>
</dbReference>
<dbReference type="GO" id="GO:0072089">
    <property type="term" value="P:stem cell proliferation"/>
    <property type="evidence" value="ECO:0007669"/>
    <property type="project" value="Ensembl"/>
</dbReference>
<dbReference type="CDD" id="cd23316">
    <property type="entry name" value="beta-trefoil_FGF4"/>
    <property type="match status" value="1"/>
</dbReference>
<dbReference type="FunFam" id="2.80.10.50:FF:000033">
    <property type="entry name" value="Fibroblast growth factor"/>
    <property type="match status" value="1"/>
</dbReference>
<dbReference type="Gene3D" id="2.80.10.50">
    <property type="match status" value="1"/>
</dbReference>
<dbReference type="InterPro" id="IPR002209">
    <property type="entry name" value="Fibroblast_GF_fam"/>
</dbReference>
<dbReference type="InterPro" id="IPR008996">
    <property type="entry name" value="IL1/FGF"/>
</dbReference>
<dbReference type="PANTHER" id="PTHR11486">
    <property type="entry name" value="FIBROBLAST GROWTH FACTOR"/>
    <property type="match status" value="1"/>
</dbReference>
<dbReference type="Pfam" id="PF00167">
    <property type="entry name" value="FGF"/>
    <property type="match status" value="1"/>
</dbReference>
<dbReference type="PRINTS" id="PR00263">
    <property type="entry name" value="HBGFFGF"/>
</dbReference>
<dbReference type="PRINTS" id="PR00262">
    <property type="entry name" value="IL1HBGF"/>
</dbReference>
<dbReference type="SMART" id="SM00442">
    <property type="entry name" value="FGF"/>
    <property type="match status" value="1"/>
</dbReference>
<dbReference type="SUPFAM" id="SSF50353">
    <property type="entry name" value="Cytokine"/>
    <property type="match status" value="1"/>
</dbReference>
<dbReference type="PROSITE" id="PS00247">
    <property type="entry name" value="HBGF_FGF"/>
    <property type="match status" value="1"/>
</dbReference>
<keyword id="KW-0002">3D-structure</keyword>
<keyword id="KW-0025">Alternative splicing</keyword>
<keyword id="KW-0217">Developmental protein</keyword>
<keyword id="KW-0221">Differentiation</keyword>
<keyword id="KW-0339">Growth factor</keyword>
<keyword id="KW-0358">Heparin-binding</keyword>
<keyword id="KW-0497">Mitogen</keyword>
<keyword id="KW-1267">Proteomics identification</keyword>
<keyword id="KW-0656">Proto-oncogene</keyword>
<keyword id="KW-1185">Reference proteome</keyword>
<keyword id="KW-0964">Secreted</keyword>
<keyword id="KW-0732">Signal</keyword>
<comment type="function">
    <text evidence="1 3">Plays an important role in the regulation of embryonic development, cell proliferation, and cell differentiation. Required for normal limb and cardiac valve development during embryogenesis. May play a role in embryonic molar tooth bud development via inducing the expression of MSX1, MSX2 and MSX1-mediated expression of SDC1 in dental mesenchyme cells (By similarity).</text>
</comment>
<comment type="subunit">
    <text evidence="3">Interacts with FGFR1, FGFR2, FGFR3 and FGFR4. Affinity between fibroblast growth factors (FGFs) and their receptors is increased by heparan sulfate glycosaminoglycans that function as coreceptors.</text>
</comment>
<comment type="subcellular location">
    <subcellularLocation>
        <location evidence="6">Secreted</location>
    </subcellularLocation>
</comment>
<comment type="alternative products">
    <event type="alternative splicing"/>
    <isoform>
        <id>P08620-1</id>
        <name>1</name>
        <sequence type="displayed"/>
    </isoform>
    <isoform>
        <id>P08620-2</id>
        <name>2</name>
        <name>FGF4si</name>
        <sequence type="described" ref="VSP_053541"/>
    </isoform>
</comment>
<comment type="miscellaneous">
    <molecule>Isoform 2</molecule>
    <text evidence="6">Antagonist of isoform 1, shutting down FGF4-induced Erk1/2 phosphorylation.</text>
</comment>
<comment type="similarity">
    <text evidence="6">Belongs to the heparin-binding growth factors family.</text>
</comment>
<sequence length="206" mass="22048">MSGPGTAAVALLPAVLLALLAPWAGRGGAAAPTAPNGTLEAELERRWESLVALSLARLPVAAQPKEAAVQSGAGDYLLGIKRLRRLYCNVGIGFHLQALPDGRIGGAHADTRDSLLELSPVERGVVSIFGVASRFFVAMSSKGKLYGSPFFTDECTFKEILLPNNYNAYESYKYPGMFIALSKNGKTKKGNRVSPTMKVTHFLPRL</sequence>